<accession>B3QN92</accession>
<proteinExistence type="inferred from homology"/>
<name>ARGR_CHLP8</name>
<evidence type="ECO:0000255" key="1">
    <source>
        <dbReference type="HAMAP-Rule" id="MF_00173"/>
    </source>
</evidence>
<comment type="function">
    <text evidence="1">Regulates arginine biosynthesis genes.</text>
</comment>
<comment type="pathway">
    <text>Amino-acid biosynthesis; L-arginine biosynthesis [regulation].</text>
</comment>
<comment type="subcellular location">
    <subcellularLocation>
        <location evidence="1">Cytoplasm</location>
    </subcellularLocation>
</comment>
<comment type="similarity">
    <text evidence="1">Belongs to the ArgR family.</text>
</comment>
<organism>
    <name type="scientific">Chlorobaculum parvum (strain DSM 263 / NCIMB 8327)</name>
    <name type="common">Chlorobium vibrioforme subsp. thiosulfatophilum</name>
    <dbReference type="NCBI Taxonomy" id="517417"/>
    <lineage>
        <taxon>Bacteria</taxon>
        <taxon>Pseudomonadati</taxon>
        <taxon>Chlorobiota</taxon>
        <taxon>Chlorobiia</taxon>
        <taxon>Chlorobiales</taxon>
        <taxon>Chlorobiaceae</taxon>
        <taxon>Chlorobaculum</taxon>
    </lineage>
</organism>
<feature type="chain" id="PRO_1000097860" description="Arginine repressor">
    <location>
        <begin position="1"/>
        <end position="149"/>
    </location>
</feature>
<keyword id="KW-0028">Amino-acid biosynthesis</keyword>
<keyword id="KW-0055">Arginine biosynthesis</keyword>
<keyword id="KW-0963">Cytoplasm</keyword>
<keyword id="KW-0238">DNA-binding</keyword>
<keyword id="KW-0678">Repressor</keyword>
<keyword id="KW-0804">Transcription</keyword>
<keyword id="KW-0805">Transcription regulation</keyword>
<protein>
    <recommendedName>
        <fullName evidence="1">Arginine repressor</fullName>
    </recommendedName>
</protein>
<sequence length="149" mass="16287">MNKALRQKKIRELVENNDVSGQQELLGMLEKEGFSVAQPTLSRDFAEMGIVRNRTADGGYRLSVPEEPQEDILRGLVGMEVLSITANETSIIINTLPGRAHGVGSFLDRINSPEILGTIAGDDTVLVIPATIRKISSVKSYIQKILSQP</sequence>
<reference key="1">
    <citation type="submission" date="2008-06" db="EMBL/GenBank/DDBJ databases">
        <title>Complete sequence of Chlorobaculum parvum NCIB 8327.</title>
        <authorList>
            <consortium name="US DOE Joint Genome Institute"/>
            <person name="Lucas S."/>
            <person name="Copeland A."/>
            <person name="Lapidus A."/>
            <person name="Glavina del Rio T."/>
            <person name="Dalin E."/>
            <person name="Tice H."/>
            <person name="Bruce D."/>
            <person name="Goodwin L."/>
            <person name="Pitluck S."/>
            <person name="Schmutz J."/>
            <person name="Larimer F."/>
            <person name="Land M."/>
            <person name="Hauser L."/>
            <person name="Kyrpides N."/>
            <person name="Mikhailova N."/>
            <person name="Zhao F."/>
            <person name="Li T."/>
            <person name="Liu Z."/>
            <person name="Overmann J."/>
            <person name="Bryant D.A."/>
            <person name="Richardson P."/>
        </authorList>
    </citation>
    <scope>NUCLEOTIDE SEQUENCE [LARGE SCALE GENOMIC DNA]</scope>
    <source>
        <strain>DSM 263 / NCIMB 8327</strain>
    </source>
</reference>
<dbReference type="EMBL" id="CP001099">
    <property type="protein sequence ID" value="ACF11395.1"/>
    <property type="molecule type" value="Genomic_DNA"/>
</dbReference>
<dbReference type="RefSeq" id="WP_012502228.1">
    <property type="nucleotide sequence ID" value="NC_011027.1"/>
</dbReference>
<dbReference type="SMR" id="B3QN92"/>
<dbReference type="STRING" id="517417.Cpar_0987"/>
<dbReference type="KEGG" id="cpc:Cpar_0987"/>
<dbReference type="eggNOG" id="COG1438">
    <property type="taxonomic scope" value="Bacteria"/>
</dbReference>
<dbReference type="HOGENOM" id="CLU_097103_1_1_10"/>
<dbReference type="OrthoDB" id="9807089at2"/>
<dbReference type="UniPathway" id="UPA00068"/>
<dbReference type="Proteomes" id="UP000008811">
    <property type="component" value="Chromosome"/>
</dbReference>
<dbReference type="GO" id="GO:0005737">
    <property type="term" value="C:cytoplasm"/>
    <property type="evidence" value="ECO:0007669"/>
    <property type="project" value="UniProtKB-SubCell"/>
</dbReference>
<dbReference type="GO" id="GO:0034618">
    <property type="term" value="F:arginine binding"/>
    <property type="evidence" value="ECO:0007669"/>
    <property type="project" value="InterPro"/>
</dbReference>
<dbReference type="GO" id="GO:0003677">
    <property type="term" value="F:DNA binding"/>
    <property type="evidence" value="ECO:0007669"/>
    <property type="project" value="UniProtKB-KW"/>
</dbReference>
<dbReference type="GO" id="GO:0003700">
    <property type="term" value="F:DNA-binding transcription factor activity"/>
    <property type="evidence" value="ECO:0007669"/>
    <property type="project" value="UniProtKB-UniRule"/>
</dbReference>
<dbReference type="GO" id="GO:0006526">
    <property type="term" value="P:L-arginine biosynthetic process"/>
    <property type="evidence" value="ECO:0007669"/>
    <property type="project" value="UniProtKB-UniPathway"/>
</dbReference>
<dbReference type="GO" id="GO:0051259">
    <property type="term" value="P:protein complex oligomerization"/>
    <property type="evidence" value="ECO:0007669"/>
    <property type="project" value="InterPro"/>
</dbReference>
<dbReference type="GO" id="GO:1900079">
    <property type="term" value="P:regulation of arginine biosynthetic process"/>
    <property type="evidence" value="ECO:0007669"/>
    <property type="project" value="UniProtKB-UniRule"/>
</dbReference>
<dbReference type="Gene3D" id="3.30.1360.40">
    <property type="match status" value="1"/>
</dbReference>
<dbReference type="Gene3D" id="1.10.10.10">
    <property type="entry name" value="Winged helix-like DNA-binding domain superfamily/Winged helix DNA-binding domain"/>
    <property type="match status" value="1"/>
</dbReference>
<dbReference type="HAMAP" id="MF_00173">
    <property type="entry name" value="Arg_repressor"/>
    <property type="match status" value="1"/>
</dbReference>
<dbReference type="InterPro" id="IPR001669">
    <property type="entry name" value="Arg_repress"/>
</dbReference>
<dbReference type="InterPro" id="IPR020899">
    <property type="entry name" value="Arg_repress_C"/>
</dbReference>
<dbReference type="InterPro" id="IPR036251">
    <property type="entry name" value="Arg_repress_C_sf"/>
</dbReference>
<dbReference type="InterPro" id="IPR020900">
    <property type="entry name" value="Arg_repress_DNA-bd"/>
</dbReference>
<dbReference type="InterPro" id="IPR036388">
    <property type="entry name" value="WH-like_DNA-bd_sf"/>
</dbReference>
<dbReference type="InterPro" id="IPR036390">
    <property type="entry name" value="WH_DNA-bd_sf"/>
</dbReference>
<dbReference type="PANTHER" id="PTHR34471">
    <property type="entry name" value="ARGININE REPRESSOR"/>
    <property type="match status" value="1"/>
</dbReference>
<dbReference type="PANTHER" id="PTHR34471:SF1">
    <property type="entry name" value="ARGININE REPRESSOR"/>
    <property type="match status" value="1"/>
</dbReference>
<dbReference type="Pfam" id="PF01316">
    <property type="entry name" value="Arg_repressor"/>
    <property type="match status" value="1"/>
</dbReference>
<dbReference type="Pfam" id="PF02863">
    <property type="entry name" value="Arg_repressor_C"/>
    <property type="match status" value="1"/>
</dbReference>
<dbReference type="PRINTS" id="PR01467">
    <property type="entry name" value="ARGREPRESSOR"/>
</dbReference>
<dbReference type="SUPFAM" id="SSF55252">
    <property type="entry name" value="C-terminal domain of arginine repressor"/>
    <property type="match status" value="1"/>
</dbReference>
<dbReference type="SUPFAM" id="SSF46785">
    <property type="entry name" value="Winged helix' DNA-binding domain"/>
    <property type="match status" value="1"/>
</dbReference>
<gene>
    <name evidence="1" type="primary">argR</name>
    <name type="ordered locus">Cpar_0987</name>
</gene>